<evidence type="ECO:0000250" key="1"/>
<evidence type="ECO:0000256" key="2">
    <source>
        <dbReference type="SAM" id="MobiDB-lite"/>
    </source>
</evidence>
<evidence type="ECO:0000305" key="3"/>
<keyword id="KW-0010">Activator</keyword>
<keyword id="KW-0238">DNA-binding</keyword>
<keyword id="KW-0539">Nucleus</keyword>
<keyword id="KW-1185">Reference proteome</keyword>
<keyword id="KW-0804">Transcription</keyword>
<keyword id="KW-0805">Transcription regulation</keyword>
<name>TCP4_CAEEL</name>
<gene>
    <name type="ORF">T13F2.2</name>
</gene>
<protein>
    <recommendedName>
        <fullName>Putative RNA polymerase II transcriptional coactivator</fullName>
    </recommendedName>
</protein>
<proteinExistence type="inferred from homology"/>
<feature type="chain" id="PRO_0000215945" description="Putative RNA polymerase II transcriptional coactivator">
    <location>
        <begin position="1"/>
        <end position="124"/>
    </location>
</feature>
<feature type="region of interest" description="Disordered" evidence="2">
    <location>
        <begin position="1"/>
        <end position="61"/>
    </location>
</feature>
<feature type="compositionally biased region" description="Basic and acidic residues" evidence="2">
    <location>
        <begin position="11"/>
        <end position="21"/>
    </location>
</feature>
<feature type="compositionally biased region" description="Basic and acidic residues" evidence="2">
    <location>
        <begin position="39"/>
        <end position="58"/>
    </location>
</feature>
<dbReference type="EMBL" id="Z81122">
    <property type="protein sequence ID" value="CAB03353.1"/>
    <property type="molecule type" value="Genomic_DNA"/>
</dbReference>
<dbReference type="PIR" id="T24876">
    <property type="entry name" value="T24876"/>
</dbReference>
<dbReference type="RefSeq" id="NP_501750.1">
    <property type="nucleotide sequence ID" value="NM_069349.7"/>
</dbReference>
<dbReference type="SMR" id="Q94045"/>
<dbReference type="BioGRID" id="53139">
    <property type="interactions" value="4"/>
</dbReference>
<dbReference type="FunCoup" id="Q94045">
    <property type="interactions" value="1705"/>
</dbReference>
<dbReference type="STRING" id="6239.T13F2.2.1"/>
<dbReference type="iPTMnet" id="Q94045"/>
<dbReference type="PaxDb" id="6239-T13F2.2"/>
<dbReference type="PeptideAtlas" id="Q94045"/>
<dbReference type="EnsemblMetazoa" id="T13F2.2.1">
    <property type="protein sequence ID" value="T13F2.2.1"/>
    <property type="gene ID" value="WBGene00011743"/>
</dbReference>
<dbReference type="GeneID" id="188475"/>
<dbReference type="KEGG" id="cel:CELE_T13F2.2"/>
<dbReference type="UCSC" id="T13F2.2.1">
    <property type="organism name" value="c. elegans"/>
</dbReference>
<dbReference type="AGR" id="WB:WBGene00011743"/>
<dbReference type="CTD" id="188475"/>
<dbReference type="WormBase" id="T13F2.2">
    <property type="protein sequence ID" value="CE13621"/>
    <property type="gene ID" value="WBGene00011743"/>
</dbReference>
<dbReference type="eggNOG" id="KOG2712">
    <property type="taxonomic scope" value="Eukaryota"/>
</dbReference>
<dbReference type="GeneTree" id="ENSGT00390000008802"/>
<dbReference type="HOGENOM" id="CLU_104273_1_2_1"/>
<dbReference type="InParanoid" id="Q94045"/>
<dbReference type="OMA" id="CPFSFAY"/>
<dbReference type="OrthoDB" id="2505440at2759"/>
<dbReference type="PhylomeDB" id="Q94045"/>
<dbReference type="PRO" id="PR:Q94045"/>
<dbReference type="Proteomes" id="UP000001940">
    <property type="component" value="Chromosome IV"/>
</dbReference>
<dbReference type="Bgee" id="WBGene00011743">
    <property type="expression patterns" value="Expressed in germ line (C elegans) and 4 other cell types or tissues"/>
</dbReference>
<dbReference type="GO" id="GO:0005634">
    <property type="term" value="C:nucleus"/>
    <property type="evidence" value="ECO:0000318"/>
    <property type="project" value="GO_Central"/>
</dbReference>
<dbReference type="GO" id="GO:0005667">
    <property type="term" value="C:transcription regulator complex"/>
    <property type="evidence" value="ECO:0000318"/>
    <property type="project" value="GO_Central"/>
</dbReference>
<dbReference type="GO" id="GO:0003677">
    <property type="term" value="F:DNA binding"/>
    <property type="evidence" value="ECO:0007669"/>
    <property type="project" value="UniProtKB-KW"/>
</dbReference>
<dbReference type="GO" id="GO:0003713">
    <property type="term" value="F:transcription coactivator activity"/>
    <property type="evidence" value="ECO:0000314"/>
    <property type="project" value="WormBase"/>
</dbReference>
<dbReference type="GO" id="GO:0060261">
    <property type="term" value="P:positive regulation of transcription initiation by RNA polymerase II"/>
    <property type="evidence" value="ECO:0007669"/>
    <property type="project" value="InterPro"/>
</dbReference>
<dbReference type="GO" id="GO:0001111">
    <property type="term" value="P:RNA polymerase II promoter clearance"/>
    <property type="evidence" value="ECO:0000314"/>
    <property type="project" value="WormBase"/>
</dbReference>
<dbReference type="Gene3D" id="2.30.31.10">
    <property type="entry name" value="Transcriptional Coactivator Pc4, Chain A"/>
    <property type="match status" value="1"/>
</dbReference>
<dbReference type="InterPro" id="IPR003173">
    <property type="entry name" value="PC4_C"/>
</dbReference>
<dbReference type="InterPro" id="IPR009044">
    <property type="entry name" value="ssDNA-bd_transcriptional_reg"/>
</dbReference>
<dbReference type="InterPro" id="IPR045125">
    <property type="entry name" value="Sub1/Tcp4-like"/>
</dbReference>
<dbReference type="PANTHER" id="PTHR13215">
    <property type="entry name" value="RNA POLYMERASE II TRANSCRIPTIONAL COACTIVATOR"/>
    <property type="match status" value="1"/>
</dbReference>
<dbReference type="Pfam" id="PF02229">
    <property type="entry name" value="PC4"/>
    <property type="match status" value="1"/>
</dbReference>
<dbReference type="SUPFAM" id="SSF54447">
    <property type="entry name" value="ssDNA-binding transcriptional regulator domain"/>
    <property type="match status" value="1"/>
</dbReference>
<accession>Q94045</accession>
<comment type="function">
    <text evidence="1">General coactivator that functions cooperatively with TAFs and mediates functional interactions between upstream activators and the general transcriptional machinery. Binds single-stranded DNA (By similarity).</text>
</comment>
<comment type="subcellular location">
    <subcellularLocation>
        <location evidence="1">Nucleus</location>
    </subcellularLocation>
</comment>
<comment type="similarity">
    <text evidence="3">Belongs to the transcriptional coactivator PC4 family.</text>
</comment>
<reference key="1">
    <citation type="journal article" date="1998" name="Science">
        <title>Genome sequence of the nematode C. elegans: a platform for investigating biology.</title>
        <authorList>
            <consortium name="The C. elegans sequencing consortium"/>
        </authorList>
    </citation>
    <scope>NUCLEOTIDE SEQUENCE [LARGE SCALE GENOMIC DNA]</scope>
    <source>
        <strain>Bristol N2</strain>
    </source>
</reference>
<sequence>MSSSSSSEDELEKKVTKEQKKKETKSKKRQSEAVEEEKQEVKKAKNEEEVSGRLKDSDGNEMFEIGNLRYATVSKFKGKEYVNIREYYIDRDSQKMMPSRKGISLSKAQWANLKDLIPEIDKKF</sequence>
<organism>
    <name type="scientific">Caenorhabditis elegans</name>
    <dbReference type="NCBI Taxonomy" id="6239"/>
    <lineage>
        <taxon>Eukaryota</taxon>
        <taxon>Metazoa</taxon>
        <taxon>Ecdysozoa</taxon>
        <taxon>Nematoda</taxon>
        <taxon>Chromadorea</taxon>
        <taxon>Rhabditida</taxon>
        <taxon>Rhabditina</taxon>
        <taxon>Rhabditomorpha</taxon>
        <taxon>Rhabditoidea</taxon>
        <taxon>Rhabditidae</taxon>
        <taxon>Peloderinae</taxon>
        <taxon>Caenorhabditis</taxon>
    </lineage>
</organism>